<protein>
    <recommendedName>
        <fullName evidence="1">Peptide chain release factor 1</fullName>
        <shortName evidence="1">RF-1</shortName>
    </recommendedName>
</protein>
<reference key="1">
    <citation type="submission" date="2008-12" db="EMBL/GenBank/DDBJ databases">
        <title>Complete sequence of Chloroflexus aggregans DSM 9485.</title>
        <authorList>
            <consortium name="US DOE Joint Genome Institute"/>
            <person name="Lucas S."/>
            <person name="Copeland A."/>
            <person name="Lapidus A."/>
            <person name="Glavina del Rio T."/>
            <person name="Dalin E."/>
            <person name="Tice H."/>
            <person name="Pitluck S."/>
            <person name="Foster B."/>
            <person name="Larimer F."/>
            <person name="Land M."/>
            <person name="Hauser L."/>
            <person name="Kyrpides N."/>
            <person name="Mikhailova N."/>
            <person name="Bryant D.A."/>
            <person name="Richardson P."/>
        </authorList>
    </citation>
    <scope>NUCLEOTIDE SEQUENCE [LARGE SCALE GENOMIC DNA]</scope>
    <source>
        <strain>MD-66 / DSM 9485</strain>
    </source>
</reference>
<accession>B8G7K1</accession>
<evidence type="ECO:0000255" key="1">
    <source>
        <dbReference type="HAMAP-Rule" id="MF_00093"/>
    </source>
</evidence>
<keyword id="KW-0963">Cytoplasm</keyword>
<keyword id="KW-0488">Methylation</keyword>
<keyword id="KW-0648">Protein biosynthesis</keyword>
<proteinExistence type="inferred from homology"/>
<name>RF1_CHLAD</name>
<feature type="chain" id="PRO_1000193479" description="Peptide chain release factor 1">
    <location>
        <begin position="1"/>
        <end position="361"/>
    </location>
</feature>
<feature type="modified residue" description="N5-methylglutamine" evidence="1">
    <location>
        <position position="232"/>
    </location>
</feature>
<organism>
    <name type="scientific">Chloroflexus aggregans (strain MD-66 / DSM 9485)</name>
    <dbReference type="NCBI Taxonomy" id="326427"/>
    <lineage>
        <taxon>Bacteria</taxon>
        <taxon>Bacillati</taxon>
        <taxon>Chloroflexota</taxon>
        <taxon>Chloroflexia</taxon>
        <taxon>Chloroflexales</taxon>
        <taxon>Chloroflexineae</taxon>
        <taxon>Chloroflexaceae</taxon>
        <taxon>Chloroflexus</taxon>
    </lineage>
</organism>
<dbReference type="EMBL" id="CP001337">
    <property type="protein sequence ID" value="ACL26036.1"/>
    <property type="molecule type" value="Genomic_DNA"/>
</dbReference>
<dbReference type="RefSeq" id="WP_015941884.1">
    <property type="nucleotide sequence ID" value="NC_011831.1"/>
</dbReference>
<dbReference type="SMR" id="B8G7K1"/>
<dbReference type="STRING" id="326427.Cagg_3178"/>
<dbReference type="KEGG" id="cag:Cagg_3178"/>
<dbReference type="eggNOG" id="COG0216">
    <property type="taxonomic scope" value="Bacteria"/>
</dbReference>
<dbReference type="HOGENOM" id="CLU_036856_0_1_0"/>
<dbReference type="OrthoDB" id="9806673at2"/>
<dbReference type="Proteomes" id="UP000002508">
    <property type="component" value="Chromosome"/>
</dbReference>
<dbReference type="GO" id="GO:0005737">
    <property type="term" value="C:cytoplasm"/>
    <property type="evidence" value="ECO:0007669"/>
    <property type="project" value="UniProtKB-SubCell"/>
</dbReference>
<dbReference type="GO" id="GO:0016149">
    <property type="term" value="F:translation release factor activity, codon specific"/>
    <property type="evidence" value="ECO:0007669"/>
    <property type="project" value="UniProtKB-UniRule"/>
</dbReference>
<dbReference type="FunFam" id="3.30.160.20:FF:000004">
    <property type="entry name" value="Peptide chain release factor 1"/>
    <property type="match status" value="1"/>
</dbReference>
<dbReference type="FunFam" id="3.30.70.1660:FF:000002">
    <property type="entry name" value="Peptide chain release factor 1"/>
    <property type="match status" value="1"/>
</dbReference>
<dbReference type="Gene3D" id="3.30.160.20">
    <property type="match status" value="1"/>
</dbReference>
<dbReference type="Gene3D" id="3.30.70.1660">
    <property type="match status" value="2"/>
</dbReference>
<dbReference type="Gene3D" id="6.10.140.1950">
    <property type="match status" value="1"/>
</dbReference>
<dbReference type="HAMAP" id="MF_00093">
    <property type="entry name" value="Rel_fac_1"/>
    <property type="match status" value="1"/>
</dbReference>
<dbReference type="InterPro" id="IPR005139">
    <property type="entry name" value="PCRF"/>
</dbReference>
<dbReference type="InterPro" id="IPR000352">
    <property type="entry name" value="Pep_chain_release_fac_I"/>
</dbReference>
<dbReference type="InterPro" id="IPR045853">
    <property type="entry name" value="Pep_chain_release_fac_I_sf"/>
</dbReference>
<dbReference type="InterPro" id="IPR050057">
    <property type="entry name" value="Prokaryotic/Mito_RF"/>
</dbReference>
<dbReference type="InterPro" id="IPR004373">
    <property type="entry name" value="RF-1"/>
</dbReference>
<dbReference type="NCBIfam" id="TIGR00019">
    <property type="entry name" value="prfA"/>
    <property type="match status" value="1"/>
</dbReference>
<dbReference type="NCBIfam" id="NF001859">
    <property type="entry name" value="PRK00591.1"/>
    <property type="match status" value="1"/>
</dbReference>
<dbReference type="PANTHER" id="PTHR43804">
    <property type="entry name" value="LD18447P"/>
    <property type="match status" value="1"/>
</dbReference>
<dbReference type="PANTHER" id="PTHR43804:SF7">
    <property type="entry name" value="LD18447P"/>
    <property type="match status" value="1"/>
</dbReference>
<dbReference type="Pfam" id="PF03462">
    <property type="entry name" value="PCRF"/>
    <property type="match status" value="1"/>
</dbReference>
<dbReference type="Pfam" id="PF00472">
    <property type="entry name" value="RF-1"/>
    <property type="match status" value="1"/>
</dbReference>
<dbReference type="SMART" id="SM00937">
    <property type="entry name" value="PCRF"/>
    <property type="match status" value="1"/>
</dbReference>
<dbReference type="SUPFAM" id="SSF75620">
    <property type="entry name" value="Release factor"/>
    <property type="match status" value="1"/>
</dbReference>
<dbReference type="PROSITE" id="PS00745">
    <property type="entry name" value="RF_PROK_I"/>
    <property type="match status" value="1"/>
</dbReference>
<comment type="function">
    <text evidence="1">Peptide chain release factor 1 directs the termination of translation in response to the peptide chain termination codons UAG and UAA.</text>
</comment>
<comment type="subcellular location">
    <subcellularLocation>
        <location evidence="1">Cytoplasm</location>
    </subcellularLocation>
</comment>
<comment type="PTM">
    <text evidence="1">Methylated by PrmC. Methylation increases the termination efficiency of RF1.</text>
</comment>
<comment type="similarity">
    <text evidence="1">Belongs to the prokaryotic/mitochondrial release factor family.</text>
</comment>
<gene>
    <name evidence="1" type="primary">prfA</name>
    <name type="ordered locus">Cagg_3178</name>
</gene>
<sequence length="361" mass="40756">MFDKLEAVAQRYDELTQLMAQPEVATNVTLLQQYAREQRELEDIVTTYREYQAAQRAIAEAEAMLDENDPELRALAQEELDTQRKRLATLEEQLKVLLLPRDPNDSKDVIMEIRQGEGGDEAALFAADLFRMYTRFAESRGWKVEVDSLTENGIGGIKEVIFQIHGEGAYSQLKYEGGVHRVQRVPATEARGRIHTSTATVAVLPEVEETEIEIKPEDLRIDVFRSAGHGGQGVNTTDSAVRIVYKPGTPEEIVVTCQDGRSQIQNRERAMTVLRARLYAREQEKRQREIGASRLAQVGSGERAEKIRTYNFPQDRITDHRIGQNFSNLPAVLDGELDKIIEALIVYDTAERLRASGISNN</sequence>